<organism>
    <name type="scientific">Klebsiella pneumoniae subsp. pneumoniae (strain ATCC 700721 / MGH 78578)</name>
    <dbReference type="NCBI Taxonomy" id="272620"/>
    <lineage>
        <taxon>Bacteria</taxon>
        <taxon>Pseudomonadati</taxon>
        <taxon>Pseudomonadota</taxon>
        <taxon>Gammaproteobacteria</taxon>
        <taxon>Enterobacterales</taxon>
        <taxon>Enterobacteriaceae</taxon>
        <taxon>Klebsiella/Raoultella group</taxon>
        <taxon>Klebsiella</taxon>
        <taxon>Klebsiella pneumoniae complex</taxon>
    </lineage>
</organism>
<accession>A6T7C6</accession>
<reference key="1">
    <citation type="submission" date="2006-09" db="EMBL/GenBank/DDBJ databases">
        <authorList>
            <consortium name="The Klebsiella pneumonia Genome Sequencing Project"/>
            <person name="McClelland M."/>
            <person name="Sanderson E.K."/>
            <person name="Spieth J."/>
            <person name="Clifton W.S."/>
            <person name="Latreille P."/>
            <person name="Sabo A."/>
            <person name="Pepin K."/>
            <person name="Bhonagiri V."/>
            <person name="Porwollik S."/>
            <person name="Ali J."/>
            <person name="Wilson R.K."/>
        </authorList>
    </citation>
    <scope>NUCLEOTIDE SEQUENCE [LARGE SCALE GENOMIC DNA]</scope>
    <source>
        <strain>ATCC 700721 / MGH 78578</strain>
    </source>
</reference>
<name>OPGH_KLEP7</name>
<protein>
    <recommendedName>
        <fullName evidence="1">Glucans biosynthesis glucosyltransferase H</fullName>
        <ecNumber evidence="1">2.4.1.-</ecNumber>
    </recommendedName>
</protein>
<evidence type="ECO:0000255" key="1">
    <source>
        <dbReference type="HAMAP-Rule" id="MF_01072"/>
    </source>
</evidence>
<feature type="chain" id="PRO_1000064605" description="Glucans biosynthesis glucosyltransferase H">
    <location>
        <begin position="1"/>
        <end position="842"/>
    </location>
</feature>
<feature type="transmembrane region" description="Helical" evidence="1">
    <location>
        <begin position="140"/>
        <end position="160"/>
    </location>
</feature>
<feature type="transmembrane region" description="Helical" evidence="1">
    <location>
        <begin position="194"/>
        <end position="214"/>
    </location>
</feature>
<feature type="transmembrane region" description="Helical" evidence="1">
    <location>
        <begin position="513"/>
        <end position="533"/>
    </location>
</feature>
<feature type="transmembrane region" description="Helical" evidence="1">
    <location>
        <begin position="568"/>
        <end position="588"/>
    </location>
</feature>
<feature type="transmembrane region" description="Helical" evidence="1">
    <location>
        <begin position="615"/>
        <end position="635"/>
    </location>
</feature>
<feature type="transmembrane region" description="Helical" evidence="1">
    <location>
        <begin position="656"/>
        <end position="676"/>
    </location>
</feature>
<feature type="transmembrane region" description="Helical" evidence="1">
    <location>
        <begin position="680"/>
        <end position="700"/>
    </location>
</feature>
<comment type="function">
    <text evidence="1">Involved in the biosynthesis of osmoregulated periplasmic glucans (OPGs).</text>
</comment>
<comment type="pathway">
    <text evidence="1">Glycan metabolism; osmoregulated periplasmic glucan (OPG) biosynthesis.</text>
</comment>
<comment type="subcellular location">
    <subcellularLocation>
        <location evidence="1">Cell inner membrane</location>
        <topology evidence="1">Multi-pass membrane protein</topology>
    </subcellularLocation>
</comment>
<comment type="similarity">
    <text evidence="1">Belongs to the glycosyltransferase 2 family. OpgH subfamily.</text>
</comment>
<proteinExistence type="inferred from homology"/>
<gene>
    <name evidence="1" type="primary">mdoH</name>
    <name evidence="1" type="synonym">opgH</name>
    <name type="ordered locus">KPN78578_10360</name>
    <name type="ORF">KPN_01064</name>
</gene>
<dbReference type="EC" id="2.4.1.-" evidence="1"/>
<dbReference type="EMBL" id="CP000647">
    <property type="protein sequence ID" value="ABR76497.1"/>
    <property type="molecule type" value="Genomic_DNA"/>
</dbReference>
<dbReference type="RefSeq" id="WP_012068545.1">
    <property type="nucleotide sequence ID" value="NC_009648.1"/>
</dbReference>
<dbReference type="STRING" id="272620.KPN_01064"/>
<dbReference type="CAZy" id="GT2">
    <property type="family name" value="Glycosyltransferase Family 2"/>
</dbReference>
<dbReference type="jPOST" id="A6T7C6"/>
<dbReference type="PaxDb" id="272620-KPN_01064"/>
<dbReference type="EnsemblBacteria" id="ABR76497">
    <property type="protein sequence ID" value="ABR76497"/>
    <property type="gene ID" value="KPN_01064"/>
</dbReference>
<dbReference type="KEGG" id="kpn:KPN_01064"/>
<dbReference type="HOGENOM" id="CLU_015730_1_0_6"/>
<dbReference type="UniPathway" id="UPA00637"/>
<dbReference type="Proteomes" id="UP000000265">
    <property type="component" value="Chromosome"/>
</dbReference>
<dbReference type="GO" id="GO:0005886">
    <property type="term" value="C:plasma membrane"/>
    <property type="evidence" value="ECO:0007669"/>
    <property type="project" value="UniProtKB-SubCell"/>
</dbReference>
<dbReference type="GO" id="GO:0016758">
    <property type="term" value="F:hexosyltransferase activity"/>
    <property type="evidence" value="ECO:0007669"/>
    <property type="project" value="UniProtKB-UniRule"/>
</dbReference>
<dbReference type="GO" id="GO:0009250">
    <property type="term" value="P:glucan biosynthetic process"/>
    <property type="evidence" value="ECO:0007669"/>
    <property type="project" value="UniProtKB-UniRule"/>
</dbReference>
<dbReference type="CDD" id="cd04191">
    <property type="entry name" value="Glucan_BSP_MdoH"/>
    <property type="match status" value="1"/>
</dbReference>
<dbReference type="FunFam" id="3.90.550.10:FF:000047">
    <property type="entry name" value="Glucans biosynthesis glucosyltransferase H"/>
    <property type="match status" value="1"/>
</dbReference>
<dbReference type="Gene3D" id="3.90.550.10">
    <property type="entry name" value="Spore Coat Polysaccharide Biosynthesis Protein SpsA, Chain A"/>
    <property type="match status" value="1"/>
</dbReference>
<dbReference type="HAMAP" id="MF_01072">
    <property type="entry name" value="MdoH_OpgH"/>
    <property type="match status" value="1"/>
</dbReference>
<dbReference type="InterPro" id="IPR023725">
    <property type="entry name" value="Glucans_biosynth_gluTrFase_H"/>
</dbReference>
<dbReference type="InterPro" id="IPR001173">
    <property type="entry name" value="Glyco_trans_2-like"/>
</dbReference>
<dbReference type="InterPro" id="IPR050321">
    <property type="entry name" value="Glycosyltr_2/OpgH_subfam"/>
</dbReference>
<dbReference type="InterPro" id="IPR029044">
    <property type="entry name" value="Nucleotide-diphossugar_trans"/>
</dbReference>
<dbReference type="NCBIfam" id="NF003955">
    <property type="entry name" value="PRK05454.1-1"/>
    <property type="match status" value="1"/>
</dbReference>
<dbReference type="NCBIfam" id="NF003958">
    <property type="entry name" value="PRK05454.2-1"/>
    <property type="match status" value="1"/>
</dbReference>
<dbReference type="NCBIfam" id="NF003962">
    <property type="entry name" value="PRK05454.2-5"/>
    <property type="match status" value="1"/>
</dbReference>
<dbReference type="PANTHER" id="PTHR43867">
    <property type="entry name" value="CELLULOSE SYNTHASE CATALYTIC SUBUNIT A [UDP-FORMING]"/>
    <property type="match status" value="1"/>
</dbReference>
<dbReference type="PANTHER" id="PTHR43867:SF5">
    <property type="entry name" value="GLUCANS BIOSYNTHESIS GLUCOSYLTRANSFERASE H"/>
    <property type="match status" value="1"/>
</dbReference>
<dbReference type="Pfam" id="PF00535">
    <property type="entry name" value="Glycos_transf_2"/>
    <property type="match status" value="1"/>
</dbReference>
<dbReference type="SUPFAM" id="SSF53448">
    <property type="entry name" value="Nucleotide-diphospho-sugar transferases"/>
    <property type="match status" value="1"/>
</dbReference>
<keyword id="KW-0997">Cell inner membrane</keyword>
<keyword id="KW-1003">Cell membrane</keyword>
<keyword id="KW-0328">Glycosyltransferase</keyword>
<keyword id="KW-0472">Membrane</keyword>
<keyword id="KW-0808">Transferase</keyword>
<keyword id="KW-0812">Transmembrane</keyword>
<keyword id="KW-1133">Transmembrane helix</keyword>
<sequence length="842" mass="96082">MNKITKYIDALPLSDAEKSALPDTSLQAVHQALDDDHQTFAREDDSPLGSVKARLAHSWPDSLSGDQLVKDDEGRTQLHAMPKAKRSSMIPDPWRTNPVGRFWDRLRGRDVTPRYLSRLTQEERESEQKWRTVGTIRRYILLLLTLSQTVVATWYMKTILPYQGWALINPADMVGQNLWISFMQLLPYVLQSGILILFAVLFCWVSAGFWTALMGFLQLLIGRDKYSISASTVGDEPLNPAHRTALIMPICNEDVDRVFAGLRATWESVKATGNAAHFDVYILSDSYNPDICVAEQKAWMELIAEVQGEGQIFYRRRRRRVKRKSGNIDDFCRRWGSQYSYMVVLDADSVMTGECLSSLVRLMEANPNAGIIQSSPRASGMDTLYARCQQFATRVYGPLFTAGLHFWQLGESHYWGHNAIIRVKPFIEHCALAPLPGEGNFAGSILSHDFVEAALMRRAGWGVWIAYDLPGSYEELPPNLLDELKRDRRWCQGNLMNFRLFLVRGMHPVHRAVFLTGVMSYLSAPLWFMFLALSTALQVVHALTEPQYFLQPRQLFPVWPQWRPELAIALFASTMVLLFLPKLLSIILVWCKGPKEYGGFFRVTLSLLLEVLFSVLLAPVRMLFHTVFVVSAFLGWEVVWNSPQRDDDSTPWGEAFMRHGSQLLLGLVWAVGMAWLDLRFLFWLAPIVVSLILSPFVSAISSRATVGLRTKRWKLFLIPEEYSPPQVLKDTDAYLTMNRQRSLDDGFMHAVFNPSFNALATAMATARHRQGHILEIARERHVEQALNETPDKLNRDRRLVLLSDPVTMSRLHYRVWAAPEKYSSWVNAYQQLALNPLALKTK</sequence>